<dbReference type="EC" id="7.1.1.-" evidence="1"/>
<dbReference type="EMBL" id="AP008957">
    <property type="protein sequence ID" value="BAH33425.1"/>
    <property type="molecule type" value="Genomic_DNA"/>
</dbReference>
<dbReference type="RefSeq" id="WP_003942238.1">
    <property type="nucleotide sequence ID" value="NC_012490.1"/>
</dbReference>
<dbReference type="SMR" id="C0ZYJ0"/>
<dbReference type="GeneID" id="93803639"/>
<dbReference type="KEGG" id="rer:RER_27170"/>
<dbReference type="eggNOG" id="COG0713">
    <property type="taxonomic scope" value="Bacteria"/>
</dbReference>
<dbReference type="HOGENOM" id="CLU_144724_0_0_11"/>
<dbReference type="Proteomes" id="UP000002204">
    <property type="component" value="Chromosome"/>
</dbReference>
<dbReference type="GO" id="GO:0030964">
    <property type="term" value="C:NADH dehydrogenase complex"/>
    <property type="evidence" value="ECO:0007669"/>
    <property type="project" value="TreeGrafter"/>
</dbReference>
<dbReference type="GO" id="GO:0005886">
    <property type="term" value="C:plasma membrane"/>
    <property type="evidence" value="ECO:0007669"/>
    <property type="project" value="UniProtKB-SubCell"/>
</dbReference>
<dbReference type="GO" id="GO:0050136">
    <property type="term" value="F:NADH:ubiquinone reductase (non-electrogenic) activity"/>
    <property type="evidence" value="ECO:0007669"/>
    <property type="project" value="UniProtKB-UniRule"/>
</dbReference>
<dbReference type="GO" id="GO:0048038">
    <property type="term" value="F:quinone binding"/>
    <property type="evidence" value="ECO:0007669"/>
    <property type="project" value="UniProtKB-KW"/>
</dbReference>
<dbReference type="GO" id="GO:0042773">
    <property type="term" value="P:ATP synthesis coupled electron transport"/>
    <property type="evidence" value="ECO:0007669"/>
    <property type="project" value="InterPro"/>
</dbReference>
<dbReference type="FunFam" id="1.10.287.3510:FF:000001">
    <property type="entry name" value="NADH-quinone oxidoreductase subunit K"/>
    <property type="match status" value="1"/>
</dbReference>
<dbReference type="Gene3D" id="1.10.287.3510">
    <property type="match status" value="1"/>
</dbReference>
<dbReference type="HAMAP" id="MF_01456">
    <property type="entry name" value="NDH1_NuoK"/>
    <property type="match status" value="1"/>
</dbReference>
<dbReference type="InterPro" id="IPR001133">
    <property type="entry name" value="NADH_UbQ_OxRdtase_chain4L/K"/>
</dbReference>
<dbReference type="InterPro" id="IPR039428">
    <property type="entry name" value="NUOK/Mnh_C1-like"/>
</dbReference>
<dbReference type="NCBIfam" id="NF004320">
    <property type="entry name" value="PRK05715.1-2"/>
    <property type="match status" value="1"/>
</dbReference>
<dbReference type="NCBIfam" id="NF004321">
    <property type="entry name" value="PRK05715.1-3"/>
    <property type="match status" value="1"/>
</dbReference>
<dbReference type="NCBIfam" id="NF004323">
    <property type="entry name" value="PRK05715.1-5"/>
    <property type="match status" value="1"/>
</dbReference>
<dbReference type="PANTHER" id="PTHR11434:SF21">
    <property type="entry name" value="NADH DEHYDROGENASE SUBUNIT 4L-RELATED"/>
    <property type="match status" value="1"/>
</dbReference>
<dbReference type="PANTHER" id="PTHR11434">
    <property type="entry name" value="NADH-UBIQUINONE OXIDOREDUCTASE SUBUNIT ND4L"/>
    <property type="match status" value="1"/>
</dbReference>
<dbReference type="Pfam" id="PF00420">
    <property type="entry name" value="Oxidored_q2"/>
    <property type="match status" value="1"/>
</dbReference>
<organism>
    <name type="scientific">Rhodococcus erythropolis (strain PR4 / NBRC 100887)</name>
    <dbReference type="NCBI Taxonomy" id="234621"/>
    <lineage>
        <taxon>Bacteria</taxon>
        <taxon>Bacillati</taxon>
        <taxon>Actinomycetota</taxon>
        <taxon>Actinomycetes</taxon>
        <taxon>Mycobacteriales</taxon>
        <taxon>Nocardiaceae</taxon>
        <taxon>Rhodococcus</taxon>
        <taxon>Rhodococcus erythropolis group</taxon>
    </lineage>
</organism>
<reference key="1">
    <citation type="submission" date="2005-03" db="EMBL/GenBank/DDBJ databases">
        <title>Comparison of the complete genome sequences of Rhodococcus erythropolis PR4 and Rhodococcus opacus B4.</title>
        <authorList>
            <person name="Takarada H."/>
            <person name="Sekine M."/>
            <person name="Hosoyama A."/>
            <person name="Yamada R."/>
            <person name="Fujisawa T."/>
            <person name="Omata S."/>
            <person name="Shimizu A."/>
            <person name="Tsukatani N."/>
            <person name="Tanikawa S."/>
            <person name="Fujita N."/>
            <person name="Harayama S."/>
        </authorList>
    </citation>
    <scope>NUCLEOTIDE SEQUENCE [LARGE SCALE GENOMIC DNA]</scope>
    <source>
        <strain>PR4 / NBRC 100887</strain>
    </source>
</reference>
<keyword id="KW-1003">Cell membrane</keyword>
<keyword id="KW-0472">Membrane</keyword>
<keyword id="KW-0520">NAD</keyword>
<keyword id="KW-0874">Quinone</keyword>
<keyword id="KW-1278">Translocase</keyword>
<keyword id="KW-0812">Transmembrane</keyword>
<keyword id="KW-1133">Transmembrane helix</keyword>
<keyword id="KW-0813">Transport</keyword>
<gene>
    <name evidence="1" type="primary">nuoK</name>
    <name type="ordered locus">RER_27170</name>
</gene>
<proteinExistence type="inferred from homology"/>
<feature type="chain" id="PRO_0000390203" description="NADH-quinone oxidoreductase subunit K">
    <location>
        <begin position="1"/>
        <end position="99"/>
    </location>
</feature>
<feature type="transmembrane region" description="Helical" evidence="1">
    <location>
        <begin position="3"/>
        <end position="23"/>
    </location>
</feature>
<feature type="transmembrane region" description="Helical" evidence="1">
    <location>
        <begin position="28"/>
        <end position="48"/>
    </location>
</feature>
<feature type="transmembrane region" description="Helical" evidence="1">
    <location>
        <begin position="62"/>
        <end position="82"/>
    </location>
</feature>
<comment type="function">
    <text evidence="1">NDH-1 shuttles electrons from NADH, via FMN and iron-sulfur (Fe-S) centers, to quinones in the respiratory chain. The immediate electron acceptor for the enzyme in this species is believed to be a menaquinone. Couples the redox reaction to proton translocation (for every two electrons transferred, four hydrogen ions are translocated across the cytoplasmic membrane), and thus conserves the redox energy in a proton gradient.</text>
</comment>
<comment type="catalytic activity">
    <reaction evidence="1">
        <text>a quinone + NADH + 5 H(+)(in) = a quinol + NAD(+) + 4 H(+)(out)</text>
        <dbReference type="Rhea" id="RHEA:57888"/>
        <dbReference type="ChEBI" id="CHEBI:15378"/>
        <dbReference type="ChEBI" id="CHEBI:24646"/>
        <dbReference type="ChEBI" id="CHEBI:57540"/>
        <dbReference type="ChEBI" id="CHEBI:57945"/>
        <dbReference type="ChEBI" id="CHEBI:132124"/>
    </reaction>
</comment>
<comment type="subunit">
    <text evidence="1">NDH-1 is composed of 14 different subunits. Subunits NuoA, H, J, K, L, M, N constitute the membrane sector of the complex.</text>
</comment>
<comment type="subcellular location">
    <subcellularLocation>
        <location evidence="1">Cell membrane</location>
        <topology evidence="1">Multi-pass membrane protein</topology>
    </subcellularLocation>
</comment>
<comment type="similarity">
    <text evidence="1">Belongs to the complex I subunit 4L family.</text>
</comment>
<sequence length="99" mass="10962">MNPENYLYLSVLLFTIGAAGVLLRRNAIVVFMCIELMLNAANLAFVTFARMHGNLDGQIFAFFTMVVAAAEVVVGLAIIMIIFRSRRSVSVDDADLLKY</sequence>
<accession>C0ZYJ0</accession>
<name>NUOK_RHOE4</name>
<protein>
    <recommendedName>
        <fullName evidence="1">NADH-quinone oxidoreductase subunit K</fullName>
        <ecNumber evidence="1">7.1.1.-</ecNumber>
    </recommendedName>
    <alternativeName>
        <fullName evidence="1">NADH dehydrogenase I subunit K</fullName>
    </alternativeName>
    <alternativeName>
        <fullName evidence="1">NDH-1 subunit K</fullName>
    </alternativeName>
</protein>
<evidence type="ECO:0000255" key="1">
    <source>
        <dbReference type="HAMAP-Rule" id="MF_01456"/>
    </source>
</evidence>